<comment type="function">
    <text evidence="1">Binds cyclic di-AMP (c-di-AMP) and is probably involved in c-di-AMP-mediated signaling pathways. In vitro, can also bind cyclic GMP-AMP (3'3'-cGAMP), with lower affinity, but not c-di-GMP or 2'3'-cGAMP.</text>
</comment>
<comment type="subunit">
    <text evidence="1">Homotrimer.</text>
</comment>
<comment type="subcellular location">
    <subcellularLocation>
        <location evidence="2">Cytoplasm</location>
    </subcellularLocation>
</comment>
<comment type="domain">
    <text evidence="1">Binds three molecules of c-di-AMP, each in a pocket located between two subunits. c-di-AMP binding is accompanied by conformational changes of both the fold and the position of the B-loop.</text>
</comment>
<comment type="disruption phenotype">
    <text evidence="1">Not essential.</text>
</comment>
<dbReference type="EMBL" id="D26185">
    <property type="protein sequence ID" value="BAA05265.1"/>
    <property type="molecule type" value="Genomic_DNA"/>
</dbReference>
<dbReference type="EMBL" id="AL009126">
    <property type="protein sequence ID" value="CAB11805.1"/>
    <property type="molecule type" value="Genomic_DNA"/>
</dbReference>
<dbReference type="PIR" id="S66059">
    <property type="entry name" value="S66059"/>
</dbReference>
<dbReference type="RefSeq" id="NP_387910.1">
    <property type="nucleotide sequence ID" value="NC_000964.3"/>
</dbReference>
<dbReference type="RefSeq" id="WP_003242755.1">
    <property type="nucleotide sequence ID" value="NZ_OZ025638.1"/>
</dbReference>
<dbReference type="PDB" id="4RLE">
    <property type="method" value="X-ray"/>
    <property type="resolution" value="1.30 A"/>
    <property type="chains" value="A=1-109"/>
</dbReference>
<dbReference type="PDBsum" id="4RLE"/>
<dbReference type="SMR" id="P37538"/>
<dbReference type="FunCoup" id="P37538">
    <property type="interactions" value="12"/>
</dbReference>
<dbReference type="STRING" id="224308.BSU00290"/>
<dbReference type="jPOST" id="P37538"/>
<dbReference type="PaxDb" id="224308-BSU00290"/>
<dbReference type="EnsemblBacteria" id="CAB11805">
    <property type="protein sequence ID" value="CAB11805"/>
    <property type="gene ID" value="BSU_00290"/>
</dbReference>
<dbReference type="GeneID" id="86871210"/>
<dbReference type="GeneID" id="938610"/>
<dbReference type="KEGG" id="bsu:BSU00290"/>
<dbReference type="PATRIC" id="fig|224308.179.peg.29"/>
<dbReference type="eggNOG" id="COG3870">
    <property type="taxonomic scope" value="Bacteria"/>
</dbReference>
<dbReference type="InParanoid" id="P37538"/>
<dbReference type="OrthoDB" id="9794275at2"/>
<dbReference type="PhylomeDB" id="P37538"/>
<dbReference type="BioCyc" id="BSUB:BSU00290-MONOMER"/>
<dbReference type="EvolutionaryTrace" id="P37538"/>
<dbReference type="Proteomes" id="UP000001570">
    <property type="component" value="Chromosome"/>
</dbReference>
<dbReference type="GO" id="GO:0005737">
    <property type="term" value="C:cytoplasm"/>
    <property type="evidence" value="ECO:0007669"/>
    <property type="project" value="UniProtKB-SubCell"/>
</dbReference>
<dbReference type="Gene3D" id="3.30.70.120">
    <property type="match status" value="1"/>
</dbReference>
<dbReference type="InterPro" id="IPR010375">
    <property type="entry name" value="CdAMP_rec"/>
</dbReference>
<dbReference type="InterPro" id="IPR011322">
    <property type="entry name" value="N-reg_PII-like_a/b"/>
</dbReference>
<dbReference type="InterPro" id="IPR015867">
    <property type="entry name" value="N-reg_PII/ATP_PRibTrfase_C"/>
</dbReference>
<dbReference type="PANTHER" id="PTHR38456">
    <property type="entry name" value="CYCLIC DI-AMP RECEPTOR A"/>
    <property type="match status" value="1"/>
</dbReference>
<dbReference type="PANTHER" id="PTHR38456:SF1">
    <property type="entry name" value="CYCLIC DI-AMP RECEPTOR A"/>
    <property type="match status" value="1"/>
</dbReference>
<dbReference type="Pfam" id="PF06153">
    <property type="entry name" value="CdAMP_rec"/>
    <property type="match status" value="1"/>
</dbReference>
<dbReference type="SUPFAM" id="SSF54913">
    <property type="entry name" value="GlnB-like"/>
    <property type="match status" value="1"/>
</dbReference>
<protein>
    <recommendedName>
        <fullName evidence="3">Cyclic di-AMP receptor A</fullName>
        <shortName evidence="3">c-di-AMP receptor A</shortName>
    </recommendedName>
    <alternativeName>
        <fullName evidence="3">PII-like signal transduction protein DarA</fullName>
    </alternativeName>
</protein>
<sequence>MKLIVAVVQDQDSNRLLKTLTDHNFRVTKLATTGGFLKSGNTTFMIGVEDIRVNKALSLIKENGQKRDQMIAPVSPMGGNADSYVPYPVEVEVGGATVFVLPVDEFHQF</sequence>
<organism>
    <name type="scientific">Bacillus subtilis (strain 168)</name>
    <dbReference type="NCBI Taxonomy" id="224308"/>
    <lineage>
        <taxon>Bacteria</taxon>
        <taxon>Bacillati</taxon>
        <taxon>Bacillota</taxon>
        <taxon>Bacilli</taxon>
        <taxon>Bacillales</taxon>
        <taxon>Bacillaceae</taxon>
        <taxon>Bacillus</taxon>
    </lineage>
</organism>
<gene>
    <name evidence="3" type="primary">darA</name>
    <name type="synonym">yaaQ</name>
    <name type="ordered locus">BSU00290</name>
</gene>
<name>DARA_BACSU</name>
<reference key="1">
    <citation type="journal article" date="1994" name="DNA Res.">
        <title>Systematic sequencing of the 180 kilobase region of the Bacillus subtilis chromosome containing the replication origin.</title>
        <authorList>
            <person name="Ogasawara N."/>
            <person name="Nakai S."/>
            <person name="Yoshikawa H."/>
        </authorList>
    </citation>
    <scope>NUCLEOTIDE SEQUENCE [GENOMIC DNA]</scope>
    <source>
        <strain>168</strain>
    </source>
</reference>
<reference key="2">
    <citation type="journal article" date="1997" name="Nature">
        <title>The complete genome sequence of the Gram-positive bacterium Bacillus subtilis.</title>
        <authorList>
            <person name="Kunst F."/>
            <person name="Ogasawara N."/>
            <person name="Moszer I."/>
            <person name="Albertini A.M."/>
            <person name="Alloni G."/>
            <person name="Azevedo V."/>
            <person name="Bertero M.G."/>
            <person name="Bessieres P."/>
            <person name="Bolotin A."/>
            <person name="Borchert S."/>
            <person name="Borriss R."/>
            <person name="Boursier L."/>
            <person name="Brans A."/>
            <person name="Braun M."/>
            <person name="Brignell S.C."/>
            <person name="Bron S."/>
            <person name="Brouillet S."/>
            <person name="Bruschi C.V."/>
            <person name="Caldwell B."/>
            <person name="Capuano V."/>
            <person name="Carter N.M."/>
            <person name="Choi S.-K."/>
            <person name="Codani J.-J."/>
            <person name="Connerton I.F."/>
            <person name="Cummings N.J."/>
            <person name="Daniel R.A."/>
            <person name="Denizot F."/>
            <person name="Devine K.M."/>
            <person name="Duesterhoeft A."/>
            <person name="Ehrlich S.D."/>
            <person name="Emmerson P.T."/>
            <person name="Entian K.-D."/>
            <person name="Errington J."/>
            <person name="Fabret C."/>
            <person name="Ferrari E."/>
            <person name="Foulger D."/>
            <person name="Fritz C."/>
            <person name="Fujita M."/>
            <person name="Fujita Y."/>
            <person name="Fuma S."/>
            <person name="Galizzi A."/>
            <person name="Galleron N."/>
            <person name="Ghim S.-Y."/>
            <person name="Glaser P."/>
            <person name="Goffeau A."/>
            <person name="Golightly E.J."/>
            <person name="Grandi G."/>
            <person name="Guiseppi G."/>
            <person name="Guy B.J."/>
            <person name="Haga K."/>
            <person name="Haiech J."/>
            <person name="Harwood C.R."/>
            <person name="Henaut A."/>
            <person name="Hilbert H."/>
            <person name="Holsappel S."/>
            <person name="Hosono S."/>
            <person name="Hullo M.-F."/>
            <person name="Itaya M."/>
            <person name="Jones L.-M."/>
            <person name="Joris B."/>
            <person name="Karamata D."/>
            <person name="Kasahara Y."/>
            <person name="Klaerr-Blanchard M."/>
            <person name="Klein C."/>
            <person name="Kobayashi Y."/>
            <person name="Koetter P."/>
            <person name="Koningstein G."/>
            <person name="Krogh S."/>
            <person name="Kumano M."/>
            <person name="Kurita K."/>
            <person name="Lapidus A."/>
            <person name="Lardinois S."/>
            <person name="Lauber J."/>
            <person name="Lazarevic V."/>
            <person name="Lee S.-M."/>
            <person name="Levine A."/>
            <person name="Liu H."/>
            <person name="Masuda S."/>
            <person name="Mauel C."/>
            <person name="Medigue C."/>
            <person name="Medina N."/>
            <person name="Mellado R.P."/>
            <person name="Mizuno M."/>
            <person name="Moestl D."/>
            <person name="Nakai S."/>
            <person name="Noback M."/>
            <person name="Noone D."/>
            <person name="O'Reilly M."/>
            <person name="Ogawa K."/>
            <person name="Ogiwara A."/>
            <person name="Oudega B."/>
            <person name="Park S.-H."/>
            <person name="Parro V."/>
            <person name="Pohl T.M."/>
            <person name="Portetelle D."/>
            <person name="Porwollik S."/>
            <person name="Prescott A.M."/>
            <person name="Presecan E."/>
            <person name="Pujic P."/>
            <person name="Purnelle B."/>
            <person name="Rapoport G."/>
            <person name="Rey M."/>
            <person name="Reynolds S."/>
            <person name="Rieger M."/>
            <person name="Rivolta C."/>
            <person name="Rocha E."/>
            <person name="Roche B."/>
            <person name="Rose M."/>
            <person name="Sadaie Y."/>
            <person name="Sato T."/>
            <person name="Scanlan E."/>
            <person name="Schleich S."/>
            <person name="Schroeter R."/>
            <person name="Scoffone F."/>
            <person name="Sekiguchi J."/>
            <person name="Sekowska A."/>
            <person name="Seror S.J."/>
            <person name="Serror P."/>
            <person name="Shin B.-S."/>
            <person name="Soldo B."/>
            <person name="Sorokin A."/>
            <person name="Tacconi E."/>
            <person name="Takagi T."/>
            <person name="Takahashi H."/>
            <person name="Takemaru K."/>
            <person name="Takeuchi M."/>
            <person name="Tamakoshi A."/>
            <person name="Tanaka T."/>
            <person name="Terpstra P."/>
            <person name="Tognoni A."/>
            <person name="Tosato V."/>
            <person name="Uchiyama S."/>
            <person name="Vandenbol M."/>
            <person name="Vannier F."/>
            <person name="Vassarotti A."/>
            <person name="Viari A."/>
            <person name="Wambutt R."/>
            <person name="Wedler E."/>
            <person name="Wedler H."/>
            <person name="Weitzenegger T."/>
            <person name="Winters P."/>
            <person name="Wipat A."/>
            <person name="Yamamoto H."/>
            <person name="Yamane K."/>
            <person name="Yasumoto K."/>
            <person name="Yata K."/>
            <person name="Yoshida K."/>
            <person name="Yoshikawa H.-F."/>
            <person name="Zumstein E."/>
            <person name="Yoshikawa H."/>
            <person name="Danchin A."/>
        </authorList>
    </citation>
    <scope>NUCLEOTIDE SEQUENCE [LARGE SCALE GENOMIC DNA]</scope>
    <source>
        <strain>168</strain>
    </source>
</reference>
<reference key="3">
    <citation type="journal article" date="2019" name="J. Biol. Chem.">
        <title>Sustained sensing in potassium homeostasis: Cyclic di-AMP controls potassium uptake by KimA at the levels of expression and activity.</title>
        <authorList>
            <person name="Gundlach J."/>
            <person name="Krueger L."/>
            <person name="Herzberg C."/>
            <person name="Turdiev A."/>
            <person name="Poehlein A."/>
            <person name="Tascon I."/>
            <person name="Weiss M."/>
            <person name="Hertel D."/>
            <person name="Daniel R."/>
            <person name="Haenelt I."/>
            <person name="Lee V.T."/>
            <person name="Stuelke J."/>
        </authorList>
    </citation>
    <scope>SUBCELLULAR LOCATION</scope>
    <source>
        <strain>168</strain>
    </source>
</reference>
<reference evidence="4" key="4">
    <citation type="journal article" date="2015" name="J. Biol. Chem.">
        <title>Identification, characterization, and structure analysis of the cyclic di-AMP-binding PII-like signal transduction protein DarA.</title>
        <authorList>
            <person name="Gundlach J."/>
            <person name="Dickmanns A."/>
            <person name="Schroder-Tittmann K."/>
            <person name="Neumann P."/>
            <person name="Kaesler J."/>
            <person name="Kampf J."/>
            <person name="Herzberg C."/>
            <person name="Hammer E."/>
            <person name="Schwede F."/>
            <person name="Kaever V."/>
            <person name="Tittmann K."/>
            <person name="Stulke J."/>
            <person name="Ficner R."/>
        </authorList>
    </citation>
    <scope>X-RAY CRYSTALLOGRAPHY (1.30 ANGSTROMS) IN COMPLEX WITH C-DI-AMP</scope>
    <scope>FUNCTION</scope>
    <scope>SUBUNIT</scope>
    <scope>DOMAIN</scope>
    <scope>DISRUPTION PHENOTYPE</scope>
    <source>
        <strain>168</strain>
    </source>
</reference>
<accession>P37538</accession>
<feature type="chain" id="PRO_0000049435" description="Cyclic di-AMP receptor A">
    <location>
        <begin position="1"/>
        <end position="109"/>
    </location>
</feature>
<feature type="binding site" evidence="1 4">
    <location>
        <position position="21"/>
    </location>
    <ligand>
        <name>3',3'-c-di-AMP</name>
        <dbReference type="ChEBI" id="CHEBI:71500"/>
    </ligand>
</feature>
<feature type="binding site" evidence="1 4">
    <location>
        <position position="25"/>
    </location>
    <ligand>
        <name>3',3'-c-di-AMP</name>
        <dbReference type="ChEBI" id="CHEBI:71500"/>
    </ligand>
</feature>
<feature type="binding site" evidence="1 4">
    <location>
        <position position="28"/>
    </location>
    <ligand>
        <name>3',3'-c-di-AMP</name>
        <dbReference type="ChEBI" id="CHEBI:71500"/>
    </ligand>
</feature>
<feature type="binding site" evidence="1 4">
    <location>
        <position position="35"/>
    </location>
    <ligand>
        <name>3',3'-c-di-AMP</name>
        <dbReference type="ChEBI" id="CHEBI:71500"/>
    </ligand>
</feature>
<feature type="binding site" evidence="1 4">
    <location>
        <position position="36"/>
    </location>
    <ligand>
        <name>3',3'-c-di-AMP</name>
        <dbReference type="ChEBI" id="CHEBI:71500"/>
    </ligand>
</feature>
<feature type="binding site" evidence="1 4">
    <location>
        <position position="37"/>
    </location>
    <ligand>
        <name>3',3'-c-di-AMP</name>
        <dbReference type="ChEBI" id="CHEBI:71500"/>
    </ligand>
</feature>
<feature type="binding site" evidence="1 4">
    <location>
        <position position="41"/>
    </location>
    <ligand>
        <name>3',3'-c-di-AMP</name>
        <dbReference type="ChEBI" id="CHEBI:71500"/>
    </ligand>
</feature>
<feature type="binding site" evidence="1 4">
    <location>
        <position position="47"/>
    </location>
    <ligand>
        <name>3',3'-c-di-AMP</name>
        <dbReference type="ChEBI" id="CHEBI:71500"/>
    </ligand>
</feature>
<feature type="binding site" evidence="1 4">
    <location>
        <position position="92"/>
    </location>
    <ligand>
        <name>3',3'-c-di-AMP</name>
        <dbReference type="ChEBI" id="CHEBI:71500"/>
    </ligand>
</feature>
<feature type="binding site" evidence="1 4">
    <location>
        <position position="94"/>
    </location>
    <ligand>
        <name>3',3'-c-di-AMP</name>
        <dbReference type="ChEBI" id="CHEBI:71500"/>
    </ligand>
</feature>
<feature type="strand" evidence="5">
    <location>
        <begin position="1"/>
        <end position="8"/>
    </location>
</feature>
<feature type="helix" evidence="5">
    <location>
        <begin position="10"/>
        <end position="22"/>
    </location>
</feature>
<feature type="strand" evidence="5">
    <location>
        <begin position="28"/>
        <end position="33"/>
    </location>
</feature>
<feature type="turn" evidence="5">
    <location>
        <begin position="35"/>
        <end position="37"/>
    </location>
</feature>
<feature type="strand" evidence="5">
    <location>
        <begin position="39"/>
        <end position="49"/>
    </location>
</feature>
<feature type="helix" evidence="5">
    <location>
        <begin position="50"/>
        <end position="52"/>
    </location>
</feature>
<feature type="helix" evidence="5">
    <location>
        <begin position="53"/>
        <end position="63"/>
    </location>
</feature>
<feature type="strand" evidence="5">
    <location>
        <begin position="67"/>
        <end position="70"/>
    </location>
</feature>
<feature type="turn" evidence="5">
    <location>
        <begin position="76"/>
        <end position="83"/>
    </location>
</feature>
<feature type="strand" evidence="5">
    <location>
        <begin position="90"/>
        <end position="93"/>
    </location>
</feature>
<feature type="strand" evidence="5">
    <location>
        <begin position="95"/>
        <end position="102"/>
    </location>
</feature>
<proteinExistence type="evidence at protein level"/>
<keyword id="KW-0002">3D-structure</keyword>
<keyword id="KW-0963">Cytoplasm</keyword>
<keyword id="KW-1185">Reference proteome</keyword>
<evidence type="ECO:0000269" key="1">
    <source>
    </source>
</evidence>
<evidence type="ECO:0000269" key="2">
    <source>
    </source>
</evidence>
<evidence type="ECO:0000303" key="3">
    <source>
    </source>
</evidence>
<evidence type="ECO:0007744" key="4">
    <source>
        <dbReference type="PDB" id="4RLE"/>
    </source>
</evidence>
<evidence type="ECO:0007829" key="5">
    <source>
        <dbReference type="PDB" id="4RLE"/>
    </source>
</evidence>